<dbReference type="EMBL" id="CR860692">
    <property type="protein sequence ID" value="CAH92808.1"/>
    <property type="molecule type" value="mRNA"/>
</dbReference>
<dbReference type="RefSeq" id="NP_001127589.1">
    <property type="nucleotide sequence ID" value="NM_001134117.1"/>
</dbReference>
<dbReference type="SMR" id="Q5R608"/>
<dbReference type="FunCoup" id="Q5R608">
    <property type="interactions" value="583"/>
</dbReference>
<dbReference type="STRING" id="9601.ENSPPYP00000004827"/>
<dbReference type="GlyCosmos" id="Q5R608">
    <property type="glycosylation" value="1 site, No reported glycans"/>
</dbReference>
<dbReference type="GeneID" id="100174668"/>
<dbReference type="KEGG" id="pon:100174668"/>
<dbReference type="CTD" id="6515"/>
<dbReference type="eggNOG" id="KOG0569">
    <property type="taxonomic scope" value="Eukaryota"/>
</dbReference>
<dbReference type="InParanoid" id="Q5R608"/>
<dbReference type="OrthoDB" id="4540492at2759"/>
<dbReference type="Proteomes" id="UP000001595">
    <property type="component" value="Unplaced"/>
</dbReference>
<dbReference type="GO" id="GO:0042995">
    <property type="term" value="C:cell projection"/>
    <property type="evidence" value="ECO:0007669"/>
    <property type="project" value="UniProtKB-SubCell"/>
</dbReference>
<dbReference type="GO" id="GO:0016020">
    <property type="term" value="C:membrane"/>
    <property type="evidence" value="ECO:0000250"/>
    <property type="project" value="UniProtKB"/>
</dbReference>
<dbReference type="GO" id="GO:0043204">
    <property type="term" value="C:perikaryon"/>
    <property type="evidence" value="ECO:0007669"/>
    <property type="project" value="UniProtKB-SubCell"/>
</dbReference>
<dbReference type="GO" id="GO:0005886">
    <property type="term" value="C:plasma membrane"/>
    <property type="evidence" value="ECO:0000250"/>
    <property type="project" value="UniProtKB"/>
</dbReference>
<dbReference type="GO" id="GO:0005536">
    <property type="term" value="F:D-glucose binding"/>
    <property type="evidence" value="ECO:0000250"/>
    <property type="project" value="UniProtKB"/>
</dbReference>
<dbReference type="GO" id="GO:0055056">
    <property type="term" value="F:D-glucose transmembrane transporter activity"/>
    <property type="evidence" value="ECO:0000250"/>
    <property type="project" value="UniProtKB"/>
</dbReference>
<dbReference type="GO" id="GO:0005354">
    <property type="term" value="F:galactose transmembrane transporter activity"/>
    <property type="evidence" value="ECO:0000250"/>
    <property type="project" value="UniProtKB"/>
</dbReference>
<dbReference type="GO" id="GO:0046323">
    <property type="term" value="P:D-glucose import"/>
    <property type="evidence" value="ECO:0007669"/>
    <property type="project" value="TreeGrafter"/>
</dbReference>
<dbReference type="GO" id="GO:1904659">
    <property type="term" value="P:D-glucose transmembrane transport"/>
    <property type="evidence" value="ECO:0000250"/>
    <property type="project" value="UniProtKB"/>
</dbReference>
<dbReference type="GO" id="GO:0070837">
    <property type="term" value="P:dehydroascorbic acid transport"/>
    <property type="evidence" value="ECO:0007669"/>
    <property type="project" value="TreeGrafter"/>
</dbReference>
<dbReference type="GO" id="GO:0015757">
    <property type="term" value="P:galactose transmembrane transport"/>
    <property type="evidence" value="ECO:0000250"/>
    <property type="project" value="UniProtKB"/>
</dbReference>
<dbReference type="CDD" id="cd17431">
    <property type="entry name" value="MFS_GLUT_Class1"/>
    <property type="match status" value="1"/>
</dbReference>
<dbReference type="FunFam" id="1.20.1250.20:FF:000040">
    <property type="entry name" value="Solute carrier family 2, facilitated glucose transporter member 1"/>
    <property type="match status" value="1"/>
</dbReference>
<dbReference type="Gene3D" id="1.20.1250.20">
    <property type="entry name" value="MFS general substrate transporter like domains"/>
    <property type="match status" value="1"/>
</dbReference>
<dbReference type="InterPro" id="IPR002945">
    <property type="entry name" value="Glc_transpt_3"/>
</dbReference>
<dbReference type="InterPro" id="IPR045263">
    <property type="entry name" value="GLUT"/>
</dbReference>
<dbReference type="InterPro" id="IPR020846">
    <property type="entry name" value="MFS_dom"/>
</dbReference>
<dbReference type="InterPro" id="IPR005828">
    <property type="entry name" value="MFS_sugar_transport-like"/>
</dbReference>
<dbReference type="InterPro" id="IPR036259">
    <property type="entry name" value="MFS_trans_sf"/>
</dbReference>
<dbReference type="InterPro" id="IPR003663">
    <property type="entry name" value="Sugar/inositol_transpt"/>
</dbReference>
<dbReference type="InterPro" id="IPR005829">
    <property type="entry name" value="Sugar_transporter_CS"/>
</dbReference>
<dbReference type="NCBIfam" id="TIGR00879">
    <property type="entry name" value="SP"/>
    <property type="match status" value="1"/>
</dbReference>
<dbReference type="PANTHER" id="PTHR23503">
    <property type="entry name" value="SOLUTE CARRIER FAMILY 2"/>
    <property type="match status" value="1"/>
</dbReference>
<dbReference type="PANTHER" id="PTHR23503:SF99">
    <property type="entry name" value="SOLUTE CARRIER FAMILY 2, FACILITATED GLUCOSE TRANSPORTER MEMBER 3"/>
    <property type="match status" value="1"/>
</dbReference>
<dbReference type="Pfam" id="PF00083">
    <property type="entry name" value="Sugar_tr"/>
    <property type="match status" value="1"/>
</dbReference>
<dbReference type="PRINTS" id="PR01192">
    <property type="entry name" value="GLUCTRSPORT3"/>
</dbReference>
<dbReference type="PRINTS" id="PR00171">
    <property type="entry name" value="SUGRTRNSPORT"/>
</dbReference>
<dbReference type="SUPFAM" id="SSF103473">
    <property type="entry name" value="MFS general substrate transporter"/>
    <property type="match status" value="1"/>
</dbReference>
<dbReference type="PROSITE" id="PS50850">
    <property type="entry name" value="MFS"/>
    <property type="match status" value="1"/>
</dbReference>
<dbReference type="PROSITE" id="PS00216">
    <property type="entry name" value="SUGAR_TRANSPORT_1"/>
    <property type="match status" value="1"/>
</dbReference>
<dbReference type="PROSITE" id="PS00217">
    <property type="entry name" value="SUGAR_TRANSPORT_2"/>
    <property type="match status" value="1"/>
</dbReference>
<keyword id="KW-1003">Cell membrane</keyword>
<keyword id="KW-0966">Cell projection</keyword>
<keyword id="KW-0325">Glycoprotein</keyword>
<keyword id="KW-0472">Membrane</keyword>
<keyword id="KW-0597">Phosphoprotein</keyword>
<keyword id="KW-1185">Reference proteome</keyword>
<keyword id="KW-0762">Sugar transport</keyword>
<keyword id="KW-0812">Transmembrane</keyword>
<keyword id="KW-1133">Transmembrane helix</keyword>
<keyword id="KW-0813">Transport</keyword>
<reference key="1">
    <citation type="submission" date="2004-11" db="EMBL/GenBank/DDBJ databases">
        <authorList>
            <consortium name="The German cDNA consortium"/>
        </authorList>
    </citation>
    <scope>NUCLEOTIDE SEQUENCE [LARGE SCALE MRNA]</scope>
    <source>
        <tissue>Brain cortex</tissue>
    </source>
</reference>
<feature type="chain" id="PRO_0000050356" description="Solute carrier family 2, facilitated glucose transporter member 3">
    <location>
        <begin position="1"/>
        <end position="496"/>
    </location>
</feature>
<feature type="topological domain" description="Cytoplasmic" evidence="1">
    <location>
        <begin position="1"/>
        <end position="10"/>
    </location>
</feature>
<feature type="transmembrane region" description="Helical; Name=1" evidence="1 4">
    <location>
        <begin position="11"/>
        <end position="32"/>
    </location>
</feature>
<feature type="topological domain" description="Extracellular" evidence="4">
    <location>
        <begin position="33"/>
        <end position="64"/>
    </location>
</feature>
<feature type="transmembrane region" description="Helical; Name=2" evidence="1 4">
    <location>
        <begin position="65"/>
        <end position="85"/>
    </location>
</feature>
<feature type="topological domain" description="Cytoplasmic" evidence="1">
    <location>
        <begin position="86"/>
        <end position="90"/>
    </location>
</feature>
<feature type="transmembrane region" description="Helical; Name=3" evidence="1 4">
    <location>
        <begin position="91"/>
        <end position="111"/>
    </location>
</feature>
<feature type="topological domain" description="Extracellular" evidence="1">
    <location>
        <begin position="112"/>
        <end position="118"/>
    </location>
</feature>
<feature type="transmembrane region" description="Helical; Name=4" evidence="1 4">
    <location>
        <begin position="119"/>
        <end position="142"/>
    </location>
</feature>
<feature type="topological domain" description="Cytoplasmic" evidence="1">
    <location>
        <begin position="143"/>
        <end position="153"/>
    </location>
</feature>
<feature type="transmembrane region" description="Helical; Name=5" evidence="1 4">
    <location>
        <begin position="154"/>
        <end position="174"/>
    </location>
</feature>
<feature type="topological domain" description="Extracellular" evidence="1">
    <location>
        <begin position="175"/>
        <end position="183"/>
    </location>
</feature>
<feature type="transmembrane region" description="Helical; Name=6" evidence="1 4">
    <location>
        <begin position="184"/>
        <end position="204"/>
    </location>
</feature>
<feature type="topological domain" description="Cytoplasmic" evidence="1">
    <location>
        <begin position="205"/>
        <end position="269"/>
    </location>
</feature>
<feature type="transmembrane region" description="Helical; Name=7" evidence="1 4">
    <location>
        <begin position="270"/>
        <end position="290"/>
    </location>
</feature>
<feature type="topological domain" description="Extracellular" evidence="1">
    <location>
        <begin position="291"/>
        <end position="304"/>
    </location>
</feature>
<feature type="transmembrane region" description="Helical; Name=8" evidence="1 4">
    <location>
        <begin position="305"/>
        <end position="325"/>
    </location>
</feature>
<feature type="topological domain" description="Cytoplasmic" evidence="1">
    <location>
        <begin position="326"/>
        <end position="331"/>
    </location>
</feature>
<feature type="transmembrane region" description="Helical; Name=9" evidence="1 4">
    <location>
        <begin position="332"/>
        <end position="352"/>
    </location>
</feature>
<feature type="topological domain" description="Extracellular" evidence="1">
    <location>
        <begin position="353"/>
        <end position="363"/>
    </location>
</feature>
<feature type="transmembrane region" description="Helical; Name=10" evidence="1 4">
    <location>
        <begin position="364"/>
        <end position="389"/>
    </location>
</feature>
<feature type="topological domain" description="Cytoplasmic" evidence="1">
    <location>
        <begin position="390"/>
        <end position="399"/>
    </location>
</feature>
<feature type="transmembrane region" description="Helical; Name=11" evidence="1 4">
    <location>
        <begin position="400"/>
        <end position="420"/>
    </location>
</feature>
<feature type="topological domain" description="Extracellular" evidence="1">
    <location>
        <begin position="421"/>
        <end position="429"/>
    </location>
</feature>
<feature type="transmembrane region" description="Helical; Name=12" evidence="1 4">
    <location>
        <begin position="430"/>
        <end position="450"/>
    </location>
</feature>
<feature type="topological domain" description="Cytoplasmic" evidence="4">
    <location>
        <begin position="451"/>
        <end position="496"/>
    </location>
</feature>
<feature type="region of interest" description="Important for selectivity against fructose" evidence="1">
    <location>
        <begin position="277"/>
        <end position="279"/>
    </location>
</feature>
<feature type="binding site" evidence="1">
    <location>
        <position position="159"/>
    </location>
    <ligand>
        <name>D-glucose</name>
        <dbReference type="ChEBI" id="CHEBI:4167"/>
    </ligand>
</feature>
<feature type="binding site" evidence="1">
    <location>
        <begin position="280"/>
        <end position="281"/>
    </location>
    <ligand>
        <name>D-glucose</name>
        <dbReference type="ChEBI" id="CHEBI:4167"/>
    </ligand>
</feature>
<feature type="binding site" evidence="1">
    <location>
        <position position="286"/>
    </location>
    <ligand>
        <name>D-glucose</name>
        <dbReference type="ChEBI" id="CHEBI:4167"/>
    </ligand>
</feature>
<feature type="binding site" evidence="1">
    <location>
        <position position="315"/>
    </location>
    <ligand>
        <name>D-glucose</name>
        <dbReference type="ChEBI" id="CHEBI:4167"/>
    </ligand>
</feature>
<feature type="binding site" evidence="1">
    <location>
        <position position="378"/>
    </location>
    <ligand>
        <name>D-glucose</name>
        <dbReference type="ChEBI" id="CHEBI:4167"/>
    </ligand>
</feature>
<feature type="binding site" evidence="1">
    <location>
        <position position="386"/>
    </location>
    <ligand>
        <name>D-glucose</name>
        <dbReference type="ChEBI" id="CHEBI:4167"/>
    </ligand>
</feature>
<feature type="modified residue" description="Phosphothreonine" evidence="2">
    <location>
        <position position="232"/>
    </location>
</feature>
<feature type="modified residue" description="Phosphoserine" evidence="2">
    <location>
        <position position="475"/>
    </location>
</feature>
<feature type="modified residue" description="Phosphoserine" evidence="3">
    <location>
        <position position="485"/>
    </location>
</feature>
<feature type="modified residue" description="Phosphothreonine" evidence="3">
    <location>
        <position position="492"/>
    </location>
</feature>
<feature type="glycosylation site" description="N-linked (GlcNAc...) asparagine" evidence="4">
    <location>
        <position position="43"/>
    </location>
</feature>
<organism>
    <name type="scientific">Pongo abelii</name>
    <name type="common">Sumatran orangutan</name>
    <name type="synonym">Pongo pygmaeus abelii</name>
    <dbReference type="NCBI Taxonomy" id="9601"/>
    <lineage>
        <taxon>Eukaryota</taxon>
        <taxon>Metazoa</taxon>
        <taxon>Chordata</taxon>
        <taxon>Craniata</taxon>
        <taxon>Vertebrata</taxon>
        <taxon>Euteleostomi</taxon>
        <taxon>Mammalia</taxon>
        <taxon>Eutheria</taxon>
        <taxon>Euarchontoglires</taxon>
        <taxon>Primates</taxon>
        <taxon>Haplorrhini</taxon>
        <taxon>Catarrhini</taxon>
        <taxon>Hominidae</taxon>
        <taxon>Pongo</taxon>
    </lineage>
</organism>
<protein>
    <recommendedName>
        <fullName evidence="5">Solute carrier family 2, facilitated glucose transporter member 3</fullName>
    </recommendedName>
    <alternativeName>
        <fullName evidence="1">Glucose transporter type 3, brain</fullName>
        <shortName evidence="1">GLUT-3</shortName>
    </alternativeName>
</protein>
<evidence type="ECO:0000250" key="1">
    <source>
        <dbReference type="UniProtKB" id="P11169"/>
    </source>
</evidence>
<evidence type="ECO:0000250" key="2">
    <source>
        <dbReference type="UniProtKB" id="P32037"/>
    </source>
</evidence>
<evidence type="ECO:0000250" key="3">
    <source>
        <dbReference type="UniProtKB" id="Q07647"/>
    </source>
</evidence>
<evidence type="ECO:0000255" key="4"/>
<evidence type="ECO:0000305" key="5"/>
<comment type="function">
    <text evidence="1 2">Facilitative glucose transporter. Can also mediate the uptake of various other monosaccharides across the cell membrane. Mediates the uptake of glucose, 2-deoxyglucose, galactose, mannose, xylose and fucose, and probably also dehydroascorbate. Does not mediate fructose transport. Required for mesendoderm differentiation (By similarity).</text>
</comment>
<comment type="catalytic activity">
    <reaction evidence="1">
        <text>D-glucose(out) = D-glucose(in)</text>
        <dbReference type="Rhea" id="RHEA:60376"/>
        <dbReference type="ChEBI" id="CHEBI:4167"/>
    </reaction>
</comment>
<comment type="catalytic activity">
    <reaction evidence="1">
        <text>D-galactose(in) = D-galactose(out)</text>
        <dbReference type="Rhea" id="RHEA:34915"/>
        <dbReference type="ChEBI" id="CHEBI:4139"/>
    </reaction>
</comment>
<comment type="activity regulation">
    <text evidence="1">Deoxyglucose transport is inhibited by D-glucose, D-galactose and maltose. Galactose transport is inhibited by D-glucose and maltose.</text>
</comment>
<comment type="subunit">
    <text evidence="2">Interacts with SMIM43; the interaction may promote SLC2A3-mediated glucose transport to meet the energy needs of mesendoderm differentiation.</text>
</comment>
<comment type="subcellular location">
    <subcellularLocation>
        <location evidence="1">Cell membrane</location>
        <topology evidence="1">Multi-pass membrane protein</topology>
    </subcellularLocation>
    <subcellularLocation>
        <location evidence="3">Perikaryon</location>
    </subcellularLocation>
    <subcellularLocation>
        <location evidence="3">Cell projection</location>
    </subcellularLocation>
    <text evidence="3">Localized to densely spaced patches along neuronal processes.</text>
</comment>
<comment type="domain">
    <text evidence="1">Transport is mediated via a series of conformation changes, switching between a conformation where the substrate-binding cavity is accessible from the outside, and a another conformation where it is accessible from the cytoplasm.</text>
</comment>
<comment type="similarity">
    <text evidence="5">Belongs to the major facilitator superfamily. Sugar transporter (TC 2.A.1.1) family. Glucose transporter subfamily.</text>
</comment>
<gene>
    <name evidence="1" type="primary">SLC2A3</name>
    <name evidence="1" type="synonym">GLUT3</name>
</gene>
<proteinExistence type="evidence at transcript level"/>
<name>GTR3_PONAB</name>
<accession>Q5R608</accession>
<sequence length="496" mass="53936">MGTQKVTPALIFAITVATIGSFQFGYNTGVINAPEKIIKEFINKTLTDKGNAPPSEVLLTSLWSLSVAIFSVGGMIGSFSVGLFVNRFGRRNSMLIVNLLAVTGGCFMGLCKVAKSVEMLILGRLIIGLFCGLCTGFVPMYIGEISPTALRGAFGTLNQLGIVVGILVAQIFGLEFILGSEELWPLLLGFTILPTILQSAALPFCPESPRFLLINRKEEENAKQILQRLWGTQDVSQDIQEMKDESARMSQEKQVTVLELFRVSSYRQPIIISIVLQLSQQLSGINAVFYYSTGIFKDAGVQEPIYATIGAGVVNTIFTVVSLFLVERAGRRTLHMIGLGGMAFCSTLMTVSLLLKDNYNGMSFVCIGAILVFVAFFEIGPGPIPWFIVAELFSQGPRPAAMAVAGCSNWTSNFLVGLLFPSAAHYLGAYVFIIFTGFLITFLAFTFFKVPETRGRTFEDITRAFEGQAHGADRSGKDGVMEVNSIEPAKETTTNV</sequence>